<name>FLHD_NITEC</name>
<gene>
    <name evidence="1" type="primary">flhD</name>
    <name type="ordered locus">Neut_0729</name>
</gene>
<organism>
    <name type="scientific">Nitrosomonas eutropha (strain DSM 101675 / C91 / Nm57)</name>
    <dbReference type="NCBI Taxonomy" id="335283"/>
    <lineage>
        <taxon>Bacteria</taxon>
        <taxon>Pseudomonadati</taxon>
        <taxon>Pseudomonadota</taxon>
        <taxon>Betaproteobacteria</taxon>
        <taxon>Nitrosomonadales</taxon>
        <taxon>Nitrosomonadaceae</taxon>
        <taxon>Nitrosomonas</taxon>
    </lineage>
</organism>
<proteinExistence type="inferred from homology"/>
<sequence length="105" mass="11833">MGTNQILDEIREVNLSYLLLAQQMLREDRVAAMYRLGIDEDIADILIKLTNSQLLKMAGSNMLLCRFRFDDSLIAEILTSHKQDRALTQSHAAILMAGQPAEKIS</sequence>
<feature type="chain" id="PRO_1000045884" description="Flagellar transcriptional regulator FlhD">
    <location>
        <begin position="1"/>
        <end position="105"/>
    </location>
</feature>
<feature type="disulfide bond" description="Interchain" evidence="1">
    <location>
        <position position="65"/>
    </location>
</feature>
<accession>Q0AI31</accession>
<dbReference type="EMBL" id="CP000450">
    <property type="protein sequence ID" value="ABI59001.1"/>
    <property type="molecule type" value="Genomic_DNA"/>
</dbReference>
<dbReference type="RefSeq" id="WP_011633826.1">
    <property type="nucleotide sequence ID" value="NC_008344.1"/>
</dbReference>
<dbReference type="SMR" id="Q0AI31"/>
<dbReference type="STRING" id="335283.Neut_0729"/>
<dbReference type="KEGG" id="net:Neut_0729"/>
<dbReference type="eggNOG" id="ENOG5031P80">
    <property type="taxonomic scope" value="Bacteria"/>
</dbReference>
<dbReference type="HOGENOM" id="CLU_144160_1_0_4"/>
<dbReference type="OrthoDB" id="5298036at2"/>
<dbReference type="Proteomes" id="UP000001966">
    <property type="component" value="Chromosome"/>
</dbReference>
<dbReference type="GO" id="GO:0005737">
    <property type="term" value="C:cytoplasm"/>
    <property type="evidence" value="ECO:0007669"/>
    <property type="project" value="UniProtKB-SubCell"/>
</dbReference>
<dbReference type="GO" id="GO:0003677">
    <property type="term" value="F:DNA binding"/>
    <property type="evidence" value="ECO:0007669"/>
    <property type="project" value="UniProtKB-UniRule"/>
</dbReference>
<dbReference type="GO" id="GO:0044780">
    <property type="term" value="P:bacterial-type flagellum assembly"/>
    <property type="evidence" value="ECO:0007669"/>
    <property type="project" value="InterPro"/>
</dbReference>
<dbReference type="GO" id="GO:0045893">
    <property type="term" value="P:positive regulation of DNA-templated transcription"/>
    <property type="evidence" value="ECO:0007669"/>
    <property type="project" value="InterPro"/>
</dbReference>
<dbReference type="GO" id="GO:1902208">
    <property type="term" value="P:regulation of bacterial-type flagellum assembly"/>
    <property type="evidence" value="ECO:0007669"/>
    <property type="project" value="UniProtKB-UniRule"/>
</dbReference>
<dbReference type="Gene3D" id="1.10.4000.10">
    <property type="entry name" value="Flagellar transcriptional activator FlhD"/>
    <property type="match status" value="1"/>
</dbReference>
<dbReference type="HAMAP" id="MF_00725">
    <property type="entry name" value="FlhD"/>
    <property type="match status" value="1"/>
</dbReference>
<dbReference type="InterPro" id="IPR023559">
    <property type="entry name" value="Flagellar_FlhD"/>
</dbReference>
<dbReference type="InterPro" id="IPR036194">
    <property type="entry name" value="FlhD_sf"/>
</dbReference>
<dbReference type="NCBIfam" id="NF002783">
    <property type="entry name" value="PRK02909.1-1"/>
    <property type="match status" value="1"/>
</dbReference>
<dbReference type="Pfam" id="PF05247">
    <property type="entry name" value="FlhD"/>
    <property type="match status" value="1"/>
</dbReference>
<dbReference type="SUPFAM" id="SSF63592">
    <property type="entry name" value="Flagellar transcriptional activator FlhD"/>
    <property type="match status" value="1"/>
</dbReference>
<keyword id="KW-0010">Activator</keyword>
<keyword id="KW-1005">Bacterial flagellum biogenesis</keyword>
<keyword id="KW-0963">Cytoplasm</keyword>
<keyword id="KW-1015">Disulfide bond</keyword>
<keyword id="KW-0238">DNA-binding</keyword>
<keyword id="KW-0804">Transcription</keyword>
<keyword id="KW-0805">Transcription regulation</keyword>
<evidence type="ECO:0000255" key="1">
    <source>
        <dbReference type="HAMAP-Rule" id="MF_00725"/>
    </source>
</evidence>
<comment type="function">
    <text evidence="1">Functions in complex with FlhC as a master transcriptional regulator that regulates transcription of several flagellar and non-flagellar operons by binding to their promoter region. Activates expression of class 2 flagellar genes, including fliA, which is a flagellum-specific sigma factor that turns on the class 3 genes. Also regulates genes whose products function in a variety of physiological pathways.</text>
</comment>
<comment type="subunit">
    <text evidence="1">Homodimer; disulfide-linked. Forms a heterohexamer composed of two FlhC and four FlhD subunits. Each FlhC binds a FlhD dimer, forming a heterotrimer, and a hexamer assembles by dimerization of two heterotrimers.</text>
</comment>
<comment type="subcellular location">
    <subcellularLocation>
        <location evidence="1">Cytoplasm</location>
    </subcellularLocation>
</comment>
<comment type="domain">
    <text evidence="1">The C-terminal region contains a putative helix-turn-helix (HTH) motif, suggesting that this region may bind DNA.</text>
</comment>
<comment type="similarity">
    <text evidence="1">Belongs to the FlhD family.</text>
</comment>
<protein>
    <recommendedName>
        <fullName evidence="1">Flagellar transcriptional regulator FlhD</fullName>
    </recommendedName>
</protein>
<reference key="1">
    <citation type="journal article" date="2007" name="Environ. Microbiol.">
        <title>Whole-genome analysis of the ammonia-oxidizing bacterium, Nitrosomonas eutropha C91: implications for niche adaptation.</title>
        <authorList>
            <person name="Stein L.Y."/>
            <person name="Arp D.J."/>
            <person name="Berube P.M."/>
            <person name="Chain P.S."/>
            <person name="Hauser L."/>
            <person name="Jetten M.S."/>
            <person name="Klotz M.G."/>
            <person name="Larimer F.W."/>
            <person name="Norton J.M."/>
            <person name="Op den Camp H.J.M."/>
            <person name="Shin M."/>
            <person name="Wei X."/>
        </authorList>
    </citation>
    <scope>NUCLEOTIDE SEQUENCE [LARGE SCALE GENOMIC DNA]</scope>
    <source>
        <strain>DSM 101675 / C91 / Nm57</strain>
    </source>
</reference>